<keyword id="KW-0053">Apoptosis</keyword>
<keyword id="KW-0221">Differentiation</keyword>
<keyword id="KW-1267">Proteomics identification</keyword>
<keyword id="KW-1185">Reference proteome</keyword>
<reference key="1">
    <citation type="submission" date="2003-06" db="EMBL/GenBank/DDBJ databases">
        <title>Cloning and characterization of DAPL1.</title>
        <authorList>
            <person name="Schulz H.L."/>
            <person name="Stojic J."/>
            <person name="Weber B.H.F."/>
        </authorList>
    </citation>
    <scope>NUCLEOTIDE SEQUENCE [MRNA]</scope>
    <scope>VARIANT PRO-60</scope>
</reference>
<reference key="2">
    <citation type="submission" date="2005-09" db="EMBL/GenBank/DDBJ databases">
        <authorList>
            <person name="Mural R.J."/>
            <person name="Istrail S."/>
            <person name="Sutton G.G."/>
            <person name="Florea L."/>
            <person name="Halpern A.L."/>
            <person name="Mobarry C.M."/>
            <person name="Lippert R."/>
            <person name="Walenz B."/>
            <person name="Shatkay H."/>
            <person name="Dew I."/>
            <person name="Miller J.R."/>
            <person name="Flanigan M.J."/>
            <person name="Edwards N.J."/>
            <person name="Bolanos R."/>
            <person name="Fasulo D."/>
            <person name="Halldorsson B.V."/>
            <person name="Hannenhalli S."/>
            <person name="Turner R."/>
            <person name="Yooseph S."/>
            <person name="Lu F."/>
            <person name="Nusskern D.R."/>
            <person name="Shue B.C."/>
            <person name="Zheng X.H."/>
            <person name="Zhong F."/>
            <person name="Delcher A.L."/>
            <person name="Huson D.H."/>
            <person name="Kravitz S.A."/>
            <person name="Mouchard L."/>
            <person name="Reinert K."/>
            <person name="Remington K.A."/>
            <person name="Clark A.G."/>
            <person name="Waterman M.S."/>
            <person name="Eichler E.E."/>
            <person name="Adams M.D."/>
            <person name="Hunkapiller M.W."/>
            <person name="Myers E.W."/>
            <person name="Venter J.C."/>
        </authorList>
    </citation>
    <scope>NUCLEOTIDE SEQUENCE [LARGE SCALE GENOMIC DNA]</scope>
</reference>
<reference key="3">
    <citation type="journal article" date="2004" name="Genome Res.">
        <title>The status, quality, and expansion of the NIH full-length cDNA project: the Mammalian Gene Collection (MGC).</title>
        <authorList>
            <consortium name="The MGC Project Team"/>
        </authorList>
    </citation>
    <scope>NUCLEOTIDE SEQUENCE [LARGE SCALE MRNA]</scope>
    <scope>VARIANT PRO-60</scope>
    <source>
        <tissue>Brain</tissue>
    </source>
</reference>
<reference key="4">
    <citation type="journal article" date="2006" name="J. Cell. Physiol.">
        <title>EEDA: a protein associated with an early stage of stratified epithelial differentiation.</title>
        <authorList>
            <person name="Sun L."/>
            <person name="Ryan D.G."/>
            <person name="Zhou M."/>
            <person name="Sun T.-T."/>
            <person name="Lavker R.M."/>
        </authorList>
    </citation>
    <scope>TISSUE SPECIFICITY</scope>
    <source>
        <tissue>Corneal epithelium</tissue>
    </source>
</reference>
<evidence type="ECO:0000250" key="1"/>
<evidence type="ECO:0000256" key="2">
    <source>
        <dbReference type="SAM" id="MobiDB-lite"/>
    </source>
</evidence>
<evidence type="ECO:0000269" key="3">
    <source>
    </source>
</evidence>
<evidence type="ECO:0000269" key="4">
    <source>
    </source>
</evidence>
<evidence type="ECO:0000269" key="5">
    <source ref="1"/>
</evidence>
<sequence>MANEVQDLLSPRKGGHPPAVKAGGMRISKKQEIGTLERHTKKTGFEKTSAIANVAKIQTLDALNDALEKLNYKFPATVHMAHQKPTPALEKVVPLKRIYIIQQPRKC</sequence>
<name>DAPL1_HUMAN</name>
<accession>A0PJW8</accession>
<accession>A0PJW9</accession>
<accession>B9EIK6</accession>
<protein>
    <recommendedName>
        <fullName>Death-associated protein-like 1</fullName>
    </recommendedName>
    <alternativeName>
        <fullName>Early epithelial differentiation-associated protein</fullName>
    </alternativeName>
</protein>
<gene>
    <name type="primary">DAPL1</name>
    <name type="synonym">EEDA</name>
</gene>
<dbReference type="EMBL" id="AY324399">
    <property type="protein sequence ID" value="AAQ93012.1"/>
    <property type="molecule type" value="mRNA"/>
</dbReference>
<dbReference type="EMBL" id="CH471058">
    <property type="protein sequence ID" value="EAX11424.1"/>
    <property type="molecule type" value="Genomic_DNA"/>
</dbReference>
<dbReference type="EMBL" id="BC127682">
    <property type="protein sequence ID" value="AAI27683.1"/>
    <property type="molecule type" value="mRNA"/>
</dbReference>
<dbReference type="EMBL" id="BC127683">
    <property type="protein sequence ID" value="AAI27684.1"/>
    <property type="molecule type" value="mRNA"/>
</dbReference>
<dbReference type="EMBL" id="BC140719">
    <property type="protein sequence ID" value="AAI40720.1"/>
    <property type="molecule type" value="mRNA"/>
</dbReference>
<dbReference type="CCDS" id="CCDS33307.1"/>
<dbReference type="RefSeq" id="NP_001017920.2">
    <property type="nucleotide sequence ID" value="NM_001017920.3"/>
</dbReference>
<dbReference type="SMR" id="A0PJW8"/>
<dbReference type="BioGRID" id="124918">
    <property type="interactions" value="8"/>
</dbReference>
<dbReference type="FunCoup" id="A0PJW8">
    <property type="interactions" value="3"/>
</dbReference>
<dbReference type="IntAct" id="A0PJW8">
    <property type="interactions" value="7"/>
</dbReference>
<dbReference type="STRING" id="9606.ENSP00000309538"/>
<dbReference type="iPTMnet" id="A0PJW8"/>
<dbReference type="PhosphoSitePlus" id="A0PJW8"/>
<dbReference type="BioMuta" id="DAPL1"/>
<dbReference type="MassIVE" id="A0PJW8"/>
<dbReference type="PaxDb" id="9606-ENSP00000309538"/>
<dbReference type="PeptideAtlas" id="A0PJW8"/>
<dbReference type="ProteomicsDB" id="65"/>
<dbReference type="Antibodypedia" id="54329">
    <property type="antibodies" value="113 antibodies from 17 providers"/>
</dbReference>
<dbReference type="DNASU" id="92196"/>
<dbReference type="Ensembl" id="ENST00000309950.8">
    <property type="protein sequence ID" value="ENSP00000309538.4"/>
    <property type="gene ID" value="ENSG00000163331.12"/>
</dbReference>
<dbReference type="GeneID" id="92196"/>
<dbReference type="KEGG" id="hsa:92196"/>
<dbReference type="MANE-Select" id="ENST00000309950.8">
    <property type="protein sequence ID" value="ENSP00000309538.4"/>
    <property type="RefSeq nucleotide sequence ID" value="NM_001017920.3"/>
    <property type="RefSeq protein sequence ID" value="NP_001017920.2"/>
</dbReference>
<dbReference type="AGR" id="HGNC:21490"/>
<dbReference type="CTD" id="92196"/>
<dbReference type="DisGeNET" id="92196"/>
<dbReference type="GeneCards" id="DAPL1"/>
<dbReference type="HGNC" id="HGNC:21490">
    <property type="gene designation" value="DAPL1"/>
</dbReference>
<dbReference type="HPA" id="ENSG00000163331">
    <property type="expression patterns" value="Tissue enhanced (epididymis, esophagus, skin)"/>
</dbReference>
<dbReference type="neXtProt" id="NX_A0PJW8"/>
<dbReference type="OpenTargets" id="ENSG00000163331"/>
<dbReference type="PharmGKB" id="PA134982815"/>
<dbReference type="VEuPathDB" id="HostDB:ENSG00000163331"/>
<dbReference type="eggNOG" id="ENOG502S7Q6">
    <property type="taxonomic scope" value="Eukaryota"/>
</dbReference>
<dbReference type="GeneTree" id="ENSGT00940000154574"/>
<dbReference type="HOGENOM" id="CLU_150759_0_0_1"/>
<dbReference type="InParanoid" id="A0PJW8"/>
<dbReference type="OMA" id="PNRMQQV"/>
<dbReference type="OrthoDB" id="9631331at2759"/>
<dbReference type="PAN-GO" id="A0PJW8">
    <property type="GO annotations" value="4 GO annotations based on evolutionary models"/>
</dbReference>
<dbReference type="PhylomeDB" id="A0PJW8"/>
<dbReference type="TreeFam" id="TF329716"/>
<dbReference type="PathwayCommons" id="A0PJW8"/>
<dbReference type="SignaLink" id="A0PJW8"/>
<dbReference type="BioGRID-ORCS" id="92196">
    <property type="hits" value="8 hits in 1059 CRISPR screens"/>
</dbReference>
<dbReference type="GenomeRNAi" id="92196"/>
<dbReference type="Pharos" id="A0PJW8">
    <property type="development level" value="Tbio"/>
</dbReference>
<dbReference type="PRO" id="PR:A0PJW8"/>
<dbReference type="Proteomes" id="UP000005640">
    <property type="component" value="Chromosome 2"/>
</dbReference>
<dbReference type="RNAct" id="A0PJW8">
    <property type="molecule type" value="protein"/>
</dbReference>
<dbReference type="Bgee" id="ENSG00000163331">
    <property type="expression patterns" value="Expressed in upper arm skin and 132 other cell types or tissues"/>
</dbReference>
<dbReference type="ExpressionAtlas" id="A0PJW8">
    <property type="expression patterns" value="baseline and differential"/>
</dbReference>
<dbReference type="GO" id="GO:0005634">
    <property type="term" value="C:nucleus"/>
    <property type="evidence" value="ECO:0007669"/>
    <property type="project" value="Ensembl"/>
</dbReference>
<dbReference type="GO" id="GO:0043022">
    <property type="term" value="F:ribosome binding"/>
    <property type="evidence" value="ECO:0000250"/>
    <property type="project" value="UniProtKB"/>
</dbReference>
<dbReference type="GO" id="GO:0031369">
    <property type="term" value="F:translation initiation factor binding"/>
    <property type="evidence" value="ECO:0000250"/>
    <property type="project" value="UniProtKB"/>
</dbReference>
<dbReference type="GO" id="GO:0030371">
    <property type="term" value="F:translation repressor activity"/>
    <property type="evidence" value="ECO:0000250"/>
    <property type="project" value="UniProtKB"/>
</dbReference>
<dbReference type="GO" id="GO:0097190">
    <property type="term" value="P:apoptotic signaling pathway"/>
    <property type="evidence" value="ECO:0000318"/>
    <property type="project" value="GO_Central"/>
</dbReference>
<dbReference type="GO" id="GO:0030154">
    <property type="term" value="P:cell differentiation"/>
    <property type="evidence" value="ECO:0007669"/>
    <property type="project" value="UniProtKB-KW"/>
</dbReference>
<dbReference type="GO" id="GO:0008283">
    <property type="term" value="P:cell population proliferation"/>
    <property type="evidence" value="ECO:0007669"/>
    <property type="project" value="Ensembl"/>
</dbReference>
<dbReference type="GO" id="GO:0010467">
    <property type="term" value="P:gene expression"/>
    <property type="evidence" value="ECO:0007669"/>
    <property type="project" value="Ensembl"/>
</dbReference>
<dbReference type="GO" id="GO:0010507">
    <property type="term" value="P:negative regulation of autophagy"/>
    <property type="evidence" value="ECO:0000318"/>
    <property type="project" value="GO_Central"/>
</dbReference>
<dbReference type="GO" id="GO:2001186">
    <property type="term" value="P:negative regulation of CD8-positive, alpha-beta T cell activation"/>
    <property type="evidence" value="ECO:0000250"/>
    <property type="project" value="UniProtKB"/>
</dbReference>
<dbReference type="GO" id="GO:0141014">
    <property type="term" value="P:ribosome hibernation"/>
    <property type="evidence" value="ECO:0000250"/>
    <property type="project" value="UniProtKB"/>
</dbReference>
<dbReference type="InterPro" id="IPR024130">
    <property type="entry name" value="DAP1/DAPL1"/>
</dbReference>
<dbReference type="PANTHER" id="PTHR13177">
    <property type="entry name" value="DEATH-ASSOCIATED PROTEIN 1"/>
    <property type="match status" value="1"/>
</dbReference>
<dbReference type="PANTHER" id="PTHR13177:SF2">
    <property type="entry name" value="DEATH-ASSOCIATED PROTEIN-LIKE 1"/>
    <property type="match status" value="1"/>
</dbReference>
<dbReference type="Pfam" id="PF15228">
    <property type="entry name" value="DAP"/>
    <property type="match status" value="1"/>
</dbReference>
<comment type="function">
    <text evidence="1">May play a role in the early stages of epithelial differentiation or in apoptosis.</text>
</comment>
<comment type="interaction">
    <interactant intactId="EBI-12840152">
        <id>A0PJW8</id>
    </interactant>
    <interactant intactId="EBI-701903">
        <id>Q14192</id>
        <label>FHL2</label>
    </interactant>
    <organismsDiffer>false</organismsDiffer>
    <experiments>3</experiments>
</comment>
<comment type="interaction">
    <interactant intactId="EBI-12840152">
        <id>A0PJW8</id>
    </interactant>
    <interactant intactId="EBI-10242151">
        <id>Q53EP0-3</id>
        <label>FNDC3B</label>
    </interactant>
    <organismsDiffer>false</organismsDiffer>
    <experiments>3</experiments>
</comment>
<comment type="interaction">
    <interactant intactId="EBI-12840152">
        <id>A0PJW8</id>
    </interactant>
    <interactant intactId="EBI-347619">
        <id>O15116</id>
        <label>LSM1</label>
    </interactant>
    <organismsDiffer>false</organismsDiffer>
    <experiments>3</experiments>
</comment>
<comment type="interaction">
    <interactant intactId="EBI-12840152">
        <id>A0PJW8</id>
    </interactant>
    <interactant intactId="EBI-746981">
        <id>Q969E8</id>
        <label>TSR2</label>
    </interactant>
    <organismsDiffer>false</organismsDiffer>
    <experiments>3</experiments>
</comment>
<comment type="interaction">
    <interactant intactId="EBI-12840152">
        <id>A0PJW8</id>
    </interactant>
    <interactant intactId="EBI-11963196">
        <id>Q15915</id>
        <label>ZIC1</label>
    </interactant>
    <organismsDiffer>false</organismsDiffer>
    <experiments>3</experiments>
</comment>
<comment type="tissue specificity">
    <text evidence="4">Expressed in hair follicle (at protein level).</text>
</comment>
<organism>
    <name type="scientific">Homo sapiens</name>
    <name type="common">Human</name>
    <dbReference type="NCBI Taxonomy" id="9606"/>
    <lineage>
        <taxon>Eukaryota</taxon>
        <taxon>Metazoa</taxon>
        <taxon>Chordata</taxon>
        <taxon>Craniata</taxon>
        <taxon>Vertebrata</taxon>
        <taxon>Euteleostomi</taxon>
        <taxon>Mammalia</taxon>
        <taxon>Eutheria</taxon>
        <taxon>Euarchontoglires</taxon>
        <taxon>Primates</taxon>
        <taxon>Haplorrhini</taxon>
        <taxon>Catarrhini</taxon>
        <taxon>Hominidae</taxon>
        <taxon>Homo</taxon>
    </lineage>
</organism>
<proteinExistence type="evidence at protein level"/>
<feature type="chain" id="PRO_0000316835" description="Death-associated protein-like 1">
    <location>
        <begin position="1"/>
        <end position="107"/>
    </location>
</feature>
<feature type="region of interest" description="Disordered" evidence="2">
    <location>
        <begin position="1"/>
        <end position="23"/>
    </location>
</feature>
<feature type="sequence variant" id="VAR_038402" description="In dbSNP:rs9869." evidence="3 5">
    <original>L</original>
    <variation>P</variation>
    <location>
        <position position="60"/>
    </location>
</feature>
<feature type="sequence variant" id="VAR_038403" description="In dbSNP:rs12535.">
    <original>A</original>
    <variation>T</variation>
    <location>
        <position position="66"/>
    </location>
</feature>